<comment type="subcellular location">
    <subcellularLocation>
        <location evidence="1">Membrane raft</location>
        <topology evidence="1">Peripheral membrane protein</topology>
    </subcellularLocation>
    <text evidence="1">Localizes within detergent-insoluble glycolipid-enriched membranes.</text>
</comment>
<comment type="similarity">
    <text evidence="3">Belongs to the AIM3 family.</text>
</comment>
<feature type="chain" id="PRO_0000399607" description="Altered inheritance of mitochondria protein 3">
    <location>
        <begin position="1"/>
        <end position="915"/>
    </location>
</feature>
<feature type="region of interest" description="Disordered" evidence="2">
    <location>
        <begin position="30"/>
        <end position="915"/>
    </location>
</feature>
<feature type="compositionally biased region" description="Acidic residues" evidence="2">
    <location>
        <begin position="64"/>
        <end position="77"/>
    </location>
</feature>
<feature type="compositionally biased region" description="Polar residues" evidence="2">
    <location>
        <begin position="103"/>
        <end position="114"/>
    </location>
</feature>
<feature type="compositionally biased region" description="Low complexity" evidence="2">
    <location>
        <begin position="140"/>
        <end position="152"/>
    </location>
</feature>
<feature type="compositionally biased region" description="Low complexity" evidence="2">
    <location>
        <begin position="162"/>
        <end position="249"/>
    </location>
</feature>
<feature type="compositionally biased region" description="Polar residues" evidence="2">
    <location>
        <begin position="253"/>
        <end position="269"/>
    </location>
</feature>
<feature type="compositionally biased region" description="Low complexity" evidence="2">
    <location>
        <begin position="283"/>
        <end position="295"/>
    </location>
</feature>
<feature type="compositionally biased region" description="Polar residues" evidence="2">
    <location>
        <begin position="296"/>
        <end position="373"/>
    </location>
</feature>
<feature type="compositionally biased region" description="Low complexity" evidence="2">
    <location>
        <begin position="383"/>
        <end position="404"/>
    </location>
</feature>
<feature type="compositionally biased region" description="Pro residues" evidence="2">
    <location>
        <begin position="405"/>
        <end position="414"/>
    </location>
</feature>
<feature type="compositionally biased region" description="Polar residues" evidence="2">
    <location>
        <begin position="426"/>
        <end position="440"/>
    </location>
</feature>
<feature type="compositionally biased region" description="Basic and acidic residues" evidence="2">
    <location>
        <begin position="470"/>
        <end position="482"/>
    </location>
</feature>
<feature type="compositionally biased region" description="Polar residues" evidence="2">
    <location>
        <begin position="502"/>
        <end position="534"/>
    </location>
</feature>
<feature type="compositionally biased region" description="Basic and acidic residues" evidence="2">
    <location>
        <begin position="556"/>
        <end position="566"/>
    </location>
</feature>
<feature type="compositionally biased region" description="Low complexity" evidence="2">
    <location>
        <begin position="654"/>
        <end position="663"/>
    </location>
</feature>
<feature type="compositionally biased region" description="Polar residues" evidence="2">
    <location>
        <begin position="696"/>
        <end position="716"/>
    </location>
</feature>
<feature type="compositionally biased region" description="Basic and acidic residues" evidence="2">
    <location>
        <begin position="736"/>
        <end position="746"/>
    </location>
</feature>
<feature type="compositionally biased region" description="Low complexity" evidence="2">
    <location>
        <begin position="783"/>
        <end position="793"/>
    </location>
</feature>
<feature type="compositionally biased region" description="Basic and acidic residues" evidence="2">
    <location>
        <begin position="831"/>
        <end position="842"/>
    </location>
</feature>
<proteinExistence type="inferred from homology"/>
<protein>
    <recommendedName>
        <fullName>Altered inheritance of mitochondria protein 3</fullName>
    </recommendedName>
</protein>
<gene>
    <name type="primary">AIM3</name>
    <name type="ORF">Kpol_376p13</name>
</gene>
<dbReference type="EMBL" id="DS480489">
    <property type="protein sequence ID" value="EDO15000.1"/>
    <property type="molecule type" value="Genomic_DNA"/>
</dbReference>
<dbReference type="RefSeq" id="XP_001642858.1">
    <property type="nucleotide sequence ID" value="XM_001642808.1"/>
</dbReference>
<dbReference type="FunCoup" id="A7TRW3">
    <property type="interactions" value="54"/>
</dbReference>
<dbReference type="STRING" id="436907.A7TRW3"/>
<dbReference type="GeneID" id="5543044"/>
<dbReference type="KEGG" id="vpo:Kpol_376p13"/>
<dbReference type="eggNOG" id="ENOG502S02E">
    <property type="taxonomic scope" value="Eukaryota"/>
</dbReference>
<dbReference type="HOGENOM" id="CLU_324433_0_0_1"/>
<dbReference type="InParanoid" id="A7TRW3"/>
<dbReference type="OMA" id="DNPFRRY"/>
<dbReference type="OrthoDB" id="3973404at2759"/>
<dbReference type="Proteomes" id="UP000000267">
    <property type="component" value="Unassembled WGS sequence"/>
</dbReference>
<dbReference type="GO" id="GO:0030479">
    <property type="term" value="C:actin cortical patch"/>
    <property type="evidence" value="ECO:0007669"/>
    <property type="project" value="InterPro"/>
</dbReference>
<dbReference type="GO" id="GO:0045121">
    <property type="term" value="C:membrane raft"/>
    <property type="evidence" value="ECO:0007669"/>
    <property type="project" value="UniProtKB-SubCell"/>
</dbReference>
<dbReference type="GO" id="GO:0051016">
    <property type="term" value="P:barbed-end actin filament capping"/>
    <property type="evidence" value="ECO:0007669"/>
    <property type="project" value="InterPro"/>
</dbReference>
<dbReference type="InterPro" id="IPR031370">
    <property type="entry name" value="Aim3"/>
</dbReference>
<dbReference type="Pfam" id="PF17096">
    <property type="entry name" value="AIM3"/>
    <property type="match status" value="1"/>
</dbReference>
<sequence length="915" mass="100922">MSDFWDKNKGSIASGFKSAGKYTYQGAKYVGKSGYNASKNHYNKSKEQRDKRDKKKGKKKNGDDEYSGDDSYSDDDSSYSTASIPVSSMKDPNSFPPPPLKPQQVQATSSSHSVEQYPASAGVPQQQLRQLPPQPISATQQPAWPQQPAANQYDGQVSAPDQSQMQYGGQTQYQQPPAMQQPPAMQQHPAMQQPPDMQQPPDMQQPPAMQQPPAMQQPPAMQQPPAMQQPPAMQQPPAMQQPPAMQQPPNMVGQPSNQFQLPEPQQRQTPPLPPVTSQPYGEAQNQAQNQGQFQATPLSQLQNMQQEETTRSVPNAYDPQQTYSQPPSIPQRHTPQPVVNQVQYQESQSSIPQVNQDYYGQQPEVNQQNNLMNRSIPPPMQQQPPMQQQPPMQQQPPMQQQPPMQQQPPMPPRGPSLAAPAYGGTPNINANAQLPASSGITVKPYNPDEVQTREPLALKVDIGNLPPPPTHRDRGTETRPPSEPKPSPAIRNPISAVPAVSRASTLDSSSVPVNSIPAHQNQPIYMQDNSSSVESFPDEETSDFNNLPPPPPPNRRVTEQNLEKSAKSSTIGQEQRNDSKTEPPRAAIVGSFNSNPTINFEPPPKPFRPVVNSDRKSESPVQPQPLARSANGPPALPSRRGTQTSFESHPTPPSMESSTPSLPNRLNRNEPPIAEKPVSSFPPPPKPFRRVEAESPSHSQVNDSNKESSAPRTHNFGNDEDEDISAPVKWNPPAELLERKSEIDVKKGKKAPPPVVKPKPKNLSSVNKVNPEYEGHKPVGSMNQNQNQNQNQNSLNSITDELTHVHLRKTGISLEDEGKKFGGNDTSIDDIPPKFEKIETSRKPKAPPAVPKKKDSIRGAPPPVPAKKKNLNATPQPPPSRRNNNVNNDNDDDDSNPFEKYMRDAVPAEENRLRK</sequence>
<keyword id="KW-0472">Membrane</keyword>
<keyword id="KW-1185">Reference proteome</keyword>
<organism>
    <name type="scientific">Vanderwaltozyma polyspora (strain ATCC 22028 / DSM 70294 / BCRC 21397 / CBS 2163 / NBRC 10782 / NRRL Y-8283 / UCD 57-17)</name>
    <name type="common">Kluyveromyces polysporus</name>
    <dbReference type="NCBI Taxonomy" id="436907"/>
    <lineage>
        <taxon>Eukaryota</taxon>
        <taxon>Fungi</taxon>
        <taxon>Dikarya</taxon>
        <taxon>Ascomycota</taxon>
        <taxon>Saccharomycotina</taxon>
        <taxon>Saccharomycetes</taxon>
        <taxon>Saccharomycetales</taxon>
        <taxon>Saccharomycetaceae</taxon>
        <taxon>Vanderwaltozyma</taxon>
    </lineage>
</organism>
<reference key="1">
    <citation type="journal article" date="2007" name="Proc. Natl. Acad. Sci. U.S.A.">
        <title>Independent sorting-out of thousands of duplicated gene pairs in two yeast species descended from a whole-genome duplication.</title>
        <authorList>
            <person name="Scannell D.R."/>
            <person name="Frank A.C."/>
            <person name="Conant G.C."/>
            <person name="Byrne K.P."/>
            <person name="Woolfit M."/>
            <person name="Wolfe K.H."/>
        </authorList>
    </citation>
    <scope>NUCLEOTIDE SEQUENCE [LARGE SCALE GENOMIC DNA]</scope>
    <source>
        <strain>ATCC 22028 / DSM 70294 / BCRC 21397 / CBS 2163 / NBRC 10782 / NRRL Y-8283 / UCD 57-17</strain>
    </source>
</reference>
<evidence type="ECO:0000250" key="1"/>
<evidence type="ECO:0000256" key="2">
    <source>
        <dbReference type="SAM" id="MobiDB-lite"/>
    </source>
</evidence>
<evidence type="ECO:0000305" key="3"/>
<accession>A7TRW3</accession>
<name>AIM3_VANPO</name>